<organismHost>
    <name type="scientific">Mycobacterium</name>
    <dbReference type="NCBI Taxonomy" id="1763"/>
</organismHost>
<keyword id="KW-1185">Reference proteome</keyword>
<reference key="1">
    <citation type="journal article" date="1998" name="J. Mol. Biol.">
        <title>Genome structure of mycobacteriophage D29: implications for phage evolution.</title>
        <authorList>
            <person name="Ford M.E."/>
            <person name="Sarkis G.J."/>
            <person name="Belanger A.E."/>
            <person name="Hendrix R.W."/>
            <person name="Hatfull G.F."/>
        </authorList>
    </citation>
    <scope>NUCLEOTIDE SEQUENCE [LARGE SCALE GENOMIC DNA]</scope>
</reference>
<proteinExistence type="predicted"/>
<sequence>MRKKHLREANTKLARDLGVAKVELAQEIQKNEDLTAANGRLVTAVNRQVAVNQNLRSENADLRSQLDTARRTFGEAFVKGSLAPVGPNRPNRQKLTEREVRDIREAYRGGMKQKDLADNYGVNPATISRTVRGIYH</sequence>
<feature type="chain" id="PRO_0000164771" description="Gene 46 protein">
    <location>
        <begin position="1"/>
        <end position="136"/>
    </location>
</feature>
<dbReference type="EMBL" id="AF022214">
    <property type="protein sequence ID" value="AAC18487.1"/>
    <property type="molecule type" value="Genomic_DNA"/>
</dbReference>
<dbReference type="PIR" id="D72805">
    <property type="entry name" value="D72805"/>
</dbReference>
<dbReference type="RefSeq" id="NP_046862.1">
    <property type="nucleotide sequence ID" value="NC_001900.1"/>
</dbReference>
<dbReference type="GeneID" id="1261586"/>
<dbReference type="KEGG" id="vg:1261586"/>
<dbReference type="OrthoDB" id="21632at10239"/>
<dbReference type="Proteomes" id="UP000002131">
    <property type="component" value="Segment"/>
</dbReference>
<dbReference type="Gene3D" id="1.10.10.60">
    <property type="entry name" value="Homeodomain-like"/>
    <property type="match status" value="1"/>
</dbReference>
<name>VG46_BPMD2</name>
<gene>
    <name type="primary">46</name>
</gene>
<organism>
    <name type="scientific">Mycobacterium phage D29</name>
    <name type="common">Mycobacteriophage D29</name>
    <dbReference type="NCBI Taxonomy" id="28369"/>
    <lineage>
        <taxon>Viruses</taxon>
        <taxon>Duplodnaviria</taxon>
        <taxon>Heunggongvirae</taxon>
        <taxon>Uroviricota</taxon>
        <taxon>Caudoviricetes</taxon>
        <taxon>Fromanvirus</taxon>
    </lineage>
</organism>
<accession>O64237</accession>
<protein>
    <recommendedName>
        <fullName>Gene 46 protein</fullName>
    </recommendedName>
    <alternativeName>
        <fullName>Gp46</fullName>
    </alternativeName>
</protein>